<organism>
    <name type="scientific">Vibrio vulnificus (strain CMCP6)</name>
    <dbReference type="NCBI Taxonomy" id="216895"/>
    <lineage>
        <taxon>Bacteria</taxon>
        <taxon>Pseudomonadati</taxon>
        <taxon>Pseudomonadota</taxon>
        <taxon>Gammaproteobacteria</taxon>
        <taxon>Vibrionales</taxon>
        <taxon>Vibrionaceae</taxon>
        <taxon>Vibrio</taxon>
    </lineage>
</organism>
<evidence type="ECO:0000255" key="1">
    <source>
        <dbReference type="HAMAP-Rule" id="MF_00157"/>
    </source>
</evidence>
<feature type="chain" id="PRO_0000208977" description="Ribonuclease T">
    <location>
        <begin position="1"/>
        <end position="217"/>
    </location>
</feature>
<feature type="domain" description="Exonuclease" evidence="1">
    <location>
        <begin position="20"/>
        <end position="195"/>
    </location>
</feature>
<feature type="active site" description="Proton donor/acceptor" evidence="1">
    <location>
        <position position="182"/>
    </location>
</feature>
<feature type="binding site" evidence="1">
    <location>
        <position position="23"/>
    </location>
    <ligand>
        <name>Mg(2+)</name>
        <dbReference type="ChEBI" id="CHEBI:18420"/>
        <label>1</label>
        <note>catalytic</note>
    </ligand>
</feature>
<feature type="binding site" evidence="1">
    <location>
        <position position="23"/>
    </location>
    <ligand>
        <name>Mg(2+)</name>
        <dbReference type="ChEBI" id="CHEBI:18420"/>
        <label>2</label>
        <note>catalytic</note>
    </ligand>
</feature>
<feature type="binding site" evidence="1">
    <location>
        <position position="25"/>
    </location>
    <ligand>
        <name>Mg(2+)</name>
        <dbReference type="ChEBI" id="CHEBI:18420"/>
        <label>2</label>
        <note>catalytic</note>
    </ligand>
</feature>
<feature type="binding site" evidence="1">
    <location>
        <position position="182"/>
    </location>
    <ligand>
        <name>Mg(2+)</name>
        <dbReference type="ChEBI" id="CHEBI:18420"/>
        <label>2</label>
        <note>catalytic</note>
    </ligand>
</feature>
<feature type="binding site" evidence="1">
    <location>
        <position position="187"/>
    </location>
    <ligand>
        <name>Mg(2+)</name>
        <dbReference type="ChEBI" id="CHEBI:18420"/>
        <label>2</label>
        <note>catalytic</note>
    </ligand>
</feature>
<feature type="site" description="Important for substrate binding and specificity" evidence="1">
    <location>
        <position position="29"/>
    </location>
</feature>
<feature type="site" description="Important for substrate binding and specificity" evidence="1">
    <location>
        <position position="77"/>
    </location>
</feature>
<feature type="site" description="Important for substrate binding and specificity" evidence="1">
    <location>
        <position position="125"/>
    </location>
</feature>
<feature type="site" description="Important for substrate binding and specificity" evidence="1">
    <location>
        <position position="147"/>
    </location>
</feature>
<comment type="function">
    <text evidence="1">Trims short 3' overhangs of a variety of RNA species, leaving a one or two nucleotide 3' overhang. Responsible for the end-turnover of tRNA: specifically removes the terminal AMP residue from uncharged tRNA (tRNA-C-C-A). Also appears to be involved in tRNA biosynthesis.</text>
</comment>
<comment type="cofactor">
    <cofactor evidence="1">
        <name>Mg(2+)</name>
        <dbReference type="ChEBI" id="CHEBI:18420"/>
    </cofactor>
    <text evidence="1">Binds two Mg(2+) per subunit. The active form of the enzyme binds two Mg(2+) ions in its active site. The first Mg(2+) forms only one salt bridge with the protein.</text>
</comment>
<comment type="subunit">
    <text evidence="1">Homodimer.</text>
</comment>
<comment type="similarity">
    <text evidence="1">Belongs to the RNase T family.</text>
</comment>
<protein>
    <recommendedName>
        <fullName evidence="1">Ribonuclease T</fullName>
        <ecNumber evidence="1">3.1.13.-</ecNumber>
    </recommendedName>
    <alternativeName>
        <fullName evidence="1">Exoribonuclease T</fullName>
        <shortName evidence="1">RNase T</shortName>
    </alternativeName>
</protein>
<keyword id="KW-0269">Exonuclease</keyword>
<keyword id="KW-0378">Hydrolase</keyword>
<keyword id="KW-0460">Magnesium</keyword>
<keyword id="KW-0479">Metal-binding</keyword>
<keyword id="KW-0540">Nuclease</keyword>
<keyword id="KW-0819">tRNA processing</keyword>
<reference key="1">
    <citation type="submission" date="2002-12" db="EMBL/GenBank/DDBJ databases">
        <title>Complete genome sequence of Vibrio vulnificus CMCP6.</title>
        <authorList>
            <person name="Rhee J.H."/>
            <person name="Kim S.Y."/>
            <person name="Chung S.S."/>
            <person name="Kim J.J."/>
            <person name="Moon Y.H."/>
            <person name="Jeong H."/>
            <person name="Choy H.E."/>
        </authorList>
    </citation>
    <scope>NUCLEOTIDE SEQUENCE [LARGE SCALE GENOMIC DNA]</scope>
    <source>
        <strain>CMCP6</strain>
    </source>
</reference>
<gene>
    <name evidence="1" type="primary">rnt</name>
    <name type="ordered locus">VV1_3103</name>
</gene>
<proteinExistence type="inferred from homology"/>
<dbReference type="EC" id="3.1.13.-" evidence="1"/>
<dbReference type="EMBL" id="AE016795">
    <property type="protein sequence ID" value="AAO11426.1"/>
    <property type="molecule type" value="Genomic_DNA"/>
</dbReference>
<dbReference type="RefSeq" id="WP_011080905.1">
    <property type="nucleotide sequence ID" value="NC_004459.3"/>
</dbReference>
<dbReference type="SMR" id="Q8D882"/>
<dbReference type="KEGG" id="vvu:VV1_3103"/>
<dbReference type="HOGENOM" id="CLU_082724_0_0_6"/>
<dbReference type="Proteomes" id="UP000002275">
    <property type="component" value="Chromosome 1"/>
</dbReference>
<dbReference type="GO" id="GO:0005829">
    <property type="term" value="C:cytosol"/>
    <property type="evidence" value="ECO:0007669"/>
    <property type="project" value="TreeGrafter"/>
</dbReference>
<dbReference type="GO" id="GO:0008408">
    <property type="term" value="F:3'-5' exonuclease activity"/>
    <property type="evidence" value="ECO:0007669"/>
    <property type="project" value="TreeGrafter"/>
</dbReference>
<dbReference type="GO" id="GO:0000287">
    <property type="term" value="F:magnesium ion binding"/>
    <property type="evidence" value="ECO:0007669"/>
    <property type="project" value="UniProtKB-UniRule"/>
</dbReference>
<dbReference type="GO" id="GO:0003676">
    <property type="term" value="F:nucleic acid binding"/>
    <property type="evidence" value="ECO:0007669"/>
    <property type="project" value="InterPro"/>
</dbReference>
<dbReference type="GO" id="GO:0016896">
    <property type="term" value="F:RNA exonuclease activity, producing 5'-phosphomonoesters"/>
    <property type="evidence" value="ECO:0007669"/>
    <property type="project" value="UniProtKB-UniRule"/>
</dbReference>
<dbReference type="GO" id="GO:0045004">
    <property type="term" value="P:DNA replication proofreading"/>
    <property type="evidence" value="ECO:0007669"/>
    <property type="project" value="TreeGrafter"/>
</dbReference>
<dbReference type="GO" id="GO:0008033">
    <property type="term" value="P:tRNA processing"/>
    <property type="evidence" value="ECO:0007669"/>
    <property type="project" value="UniProtKB-KW"/>
</dbReference>
<dbReference type="CDD" id="cd06134">
    <property type="entry name" value="RNaseT"/>
    <property type="match status" value="1"/>
</dbReference>
<dbReference type="FunFam" id="3.30.420.10:FF:000009">
    <property type="entry name" value="Ribonuclease T"/>
    <property type="match status" value="1"/>
</dbReference>
<dbReference type="Gene3D" id="3.30.420.10">
    <property type="entry name" value="Ribonuclease H-like superfamily/Ribonuclease H"/>
    <property type="match status" value="1"/>
</dbReference>
<dbReference type="HAMAP" id="MF_00157">
    <property type="entry name" value="RNase_T"/>
    <property type="match status" value="1"/>
</dbReference>
<dbReference type="InterPro" id="IPR013520">
    <property type="entry name" value="Exonuclease_RNaseT/DNA_pol3"/>
</dbReference>
<dbReference type="InterPro" id="IPR005987">
    <property type="entry name" value="RNase_T"/>
</dbReference>
<dbReference type="InterPro" id="IPR012337">
    <property type="entry name" value="RNaseH-like_sf"/>
</dbReference>
<dbReference type="InterPro" id="IPR036397">
    <property type="entry name" value="RNaseH_sf"/>
</dbReference>
<dbReference type="NCBIfam" id="TIGR01298">
    <property type="entry name" value="RNaseT"/>
    <property type="match status" value="1"/>
</dbReference>
<dbReference type="PANTHER" id="PTHR30231">
    <property type="entry name" value="DNA POLYMERASE III SUBUNIT EPSILON"/>
    <property type="match status" value="1"/>
</dbReference>
<dbReference type="PANTHER" id="PTHR30231:SF2">
    <property type="entry name" value="RIBONUCLEASE T"/>
    <property type="match status" value="1"/>
</dbReference>
<dbReference type="Pfam" id="PF00929">
    <property type="entry name" value="RNase_T"/>
    <property type="match status" value="1"/>
</dbReference>
<dbReference type="SMART" id="SM00479">
    <property type="entry name" value="EXOIII"/>
    <property type="match status" value="1"/>
</dbReference>
<dbReference type="SUPFAM" id="SSF53098">
    <property type="entry name" value="Ribonuclease H-like"/>
    <property type="match status" value="1"/>
</dbReference>
<accession>Q8D882</accession>
<name>RNT_VIBVU</name>
<sequence>MTVENTALTLKKRFRGYFPVVVDVETAGFNAQTDALLEICAVTLSMDENGDLHPASTIHFHVEPFDGANLEKEALEFNGIRDPFSPLRGAVTEQEALKEIYKLIRREQKAADCSRAIMVAHNAAFDLSFVNAANERCKLKRVPFHPFATFDTATLSGLAYGQTVLAKACKTAGMEFDNREAHSALYDTEKTAELFCGIVNKWKALGGWPLIEDENEK</sequence>